<gene>
    <name evidence="1" type="primary">gatA</name>
    <name type="ordered locus">NGR_c10960</name>
</gene>
<feature type="chain" id="PRO_1000122487" description="Glutamyl-tRNA(Gln) amidotransferase subunit A">
    <location>
        <begin position="1"/>
        <end position="493"/>
    </location>
</feature>
<feature type="active site" description="Charge relay system" evidence="1">
    <location>
        <position position="79"/>
    </location>
</feature>
<feature type="active site" description="Charge relay system" evidence="1">
    <location>
        <position position="159"/>
    </location>
</feature>
<feature type="active site" description="Acyl-ester intermediate" evidence="1">
    <location>
        <position position="183"/>
    </location>
</feature>
<organism>
    <name type="scientific">Sinorhizobium fredii (strain NBRC 101917 / NGR234)</name>
    <dbReference type="NCBI Taxonomy" id="394"/>
    <lineage>
        <taxon>Bacteria</taxon>
        <taxon>Pseudomonadati</taxon>
        <taxon>Pseudomonadota</taxon>
        <taxon>Alphaproteobacteria</taxon>
        <taxon>Hyphomicrobiales</taxon>
        <taxon>Rhizobiaceae</taxon>
        <taxon>Sinorhizobium/Ensifer group</taxon>
        <taxon>Sinorhizobium</taxon>
    </lineage>
</organism>
<comment type="function">
    <text evidence="1">Allows the formation of correctly charged Gln-tRNA(Gln) through the transamidation of misacylated Glu-tRNA(Gln) in organisms which lack glutaminyl-tRNA synthetase. The reaction takes place in the presence of glutamine and ATP through an activated gamma-phospho-Glu-tRNA(Gln).</text>
</comment>
<comment type="catalytic activity">
    <reaction evidence="1">
        <text>L-glutamyl-tRNA(Gln) + L-glutamine + ATP + H2O = L-glutaminyl-tRNA(Gln) + L-glutamate + ADP + phosphate + H(+)</text>
        <dbReference type="Rhea" id="RHEA:17521"/>
        <dbReference type="Rhea" id="RHEA-COMP:9681"/>
        <dbReference type="Rhea" id="RHEA-COMP:9684"/>
        <dbReference type="ChEBI" id="CHEBI:15377"/>
        <dbReference type="ChEBI" id="CHEBI:15378"/>
        <dbReference type="ChEBI" id="CHEBI:29985"/>
        <dbReference type="ChEBI" id="CHEBI:30616"/>
        <dbReference type="ChEBI" id="CHEBI:43474"/>
        <dbReference type="ChEBI" id="CHEBI:58359"/>
        <dbReference type="ChEBI" id="CHEBI:78520"/>
        <dbReference type="ChEBI" id="CHEBI:78521"/>
        <dbReference type="ChEBI" id="CHEBI:456216"/>
        <dbReference type="EC" id="6.3.5.7"/>
    </reaction>
</comment>
<comment type="subunit">
    <text evidence="1">Heterotrimer of A, B and C subunits.</text>
</comment>
<comment type="similarity">
    <text evidence="1">Belongs to the amidase family. GatA subfamily.</text>
</comment>
<protein>
    <recommendedName>
        <fullName evidence="1">Glutamyl-tRNA(Gln) amidotransferase subunit A</fullName>
        <shortName evidence="1">Glu-ADT subunit A</shortName>
        <ecNumber evidence="1">6.3.5.7</ecNumber>
    </recommendedName>
</protein>
<dbReference type="EC" id="6.3.5.7" evidence="1"/>
<dbReference type="EMBL" id="CP001389">
    <property type="protein sequence ID" value="ACP24882.1"/>
    <property type="molecule type" value="Genomic_DNA"/>
</dbReference>
<dbReference type="RefSeq" id="WP_012707665.1">
    <property type="nucleotide sequence ID" value="NC_012587.1"/>
</dbReference>
<dbReference type="RefSeq" id="YP_002825635.1">
    <property type="nucleotide sequence ID" value="NC_012587.1"/>
</dbReference>
<dbReference type="SMR" id="C3MAA3"/>
<dbReference type="STRING" id="394.NGR_c10960"/>
<dbReference type="KEGG" id="rhi:NGR_c10960"/>
<dbReference type="PATRIC" id="fig|394.7.peg.3923"/>
<dbReference type="eggNOG" id="COG0154">
    <property type="taxonomic scope" value="Bacteria"/>
</dbReference>
<dbReference type="HOGENOM" id="CLU_009600_0_3_5"/>
<dbReference type="OrthoDB" id="9811471at2"/>
<dbReference type="Proteomes" id="UP000001054">
    <property type="component" value="Chromosome"/>
</dbReference>
<dbReference type="GO" id="GO:0030956">
    <property type="term" value="C:glutamyl-tRNA(Gln) amidotransferase complex"/>
    <property type="evidence" value="ECO:0007669"/>
    <property type="project" value="InterPro"/>
</dbReference>
<dbReference type="GO" id="GO:0005524">
    <property type="term" value="F:ATP binding"/>
    <property type="evidence" value="ECO:0007669"/>
    <property type="project" value="UniProtKB-KW"/>
</dbReference>
<dbReference type="GO" id="GO:0050567">
    <property type="term" value="F:glutaminyl-tRNA synthase (glutamine-hydrolyzing) activity"/>
    <property type="evidence" value="ECO:0007669"/>
    <property type="project" value="UniProtKB-UniRule"/>
</dbReference>
<dbReference type="GO" id="GO:0006412">
    <property type="term" value="P:translation"/>
    <property type="evidence" value="ECO:0007669"/>
    <property type="project" value="UniProtKB-UniRule"/>
</dbReference>
<dbReference type="Gene3D" id="3.90.1300.10">
    <property type="entry name" value="Amidase signature (AS) domain"/>
    <property type="match status" value="1"/>
</dbReference>
<dbReference type="HAMAP" id="MF_00120">
    <property type="entry name" value="GatA"/>
    <property type="match status" value="1"/>
</dbReference>
<dbReference type="InterPro" id="IPR000120">
    <property type="entry name" value="Amidase"/>
</dbReference>
<dbReference type="InterPro" id="IPR020556">
    <property type="entry name" value="Amidase_CS"/>
</dbReference>
<dbReference type="InterPro" id="IPR023631">
    <property type="entry name" value="Amidase_dom"/>
</dbReference>
<dbReference type="InterPro" id="IPR036928">
    <property type="entry name" value="AS_sf"/>
</dbReference>
<dbReference type="InterPro" id="IPR004412">
    <property type="entry name" value="GatA"/>
</dbReference>
<dbReference type="NCBIfam" id="TIGR00132">
    <property type="entry name" value="gatA"/>
    <property type="match status" value="1"/>
</dbReference>
<dbReference type="PANTHER" id="PTHR11895:SF151">
    <property type="entry name" value="GLUTAMYL-TRNA(GLN) AMIDOTRANSFERASE SUBUNIT A"/>
    <property type="match status" value="1"/>
</dbReference>
<dbReference type="PANTHER" id="PTHR11895">
    <property type="entry name" value="TRANSAMIDASE"/>
    <property type="match status" value="1"/>
</dbReference>
<dbReference type="Pfam" id="PF01425">
    <property type="entry name" value="Amidase"/>
    <property type="match status" value="1"/>
</dbReference>
<dbReference type="SUPFAM" id="SSF75304">
    <property type="entry name" value="Amidase signature (AS) enzymes"/>
    <property type="match status" value="1"/>
</dbReference>
<dbReference type="PROSITE" id="PS00571">
    <property type="entry name" value="AMIDASES"/>
    <property type="match status" value="1"/>
</dbReference>
<name>GATA_SINFN</name>
<keyword id="KW-0067">ATP-binding</keyword>
<keyword id="KW-0436">Ligase</keyword>
<keyword id="KW-0547">Nucleotide-binding</keyword>
<keyword id="KW-0648">Protein biosynthesis</keyword>
<keyword id="KW-1185">Reference proteome</keyword>
<accession>C3MAA3</accession>
<proteinExistence type="inferred from homology"/>
<sequence length="493" mass="52701">MTDLTRLTIAEARAKLSAKEITAVELTDAYIGAIEAANETINAYVTVTPEKARAMAKASDARIAAGKAGALEGIPLGIKDLFGTEGVHTQACSHILDGFRPRYESTVTQNLWNDGAVMLGKLNMDEFAMGSSNETSYYGPVKNPWRAKGSNMDLVPGGSSGGSAAAVAAYLCAGATATDTGGSIRQPAAFTGTVGIKPTYGRCSRWGVVAFASSLDQAGPIARDVRDAAILLKSMASVDLKDTTSVDLPVPDYEASIGQSIKGMKIGIPKEYRVDGMPEEIEALWQQGIAWLKEAGAEIVDITLPHTKYALPAYYIVAPAEASSNLARYDGVRYGLRVDGKDIVDMYEKTRAAGFGREVKRRIMIGTYVLSAGYYDAYYLRAQKVRSLIKRDFELAFQAGVDAILTPATPSSAFGIADEDLASDPVKMYLNDIFTVTVNMAGLPGIAVPGGLDHKGLPLGLQLIGKPFDEETLFKTAHVIEQAAGRFAPSKWW</sequence>
<reference key="1">
    <citation type="journal article" date="2009" name="Appl. Environ. Microbiol.">
        <title>Rhizobium sp. strain NGR234 possesses a remarkable number of secretion systems.</title>
        <authorList>
            <person name="Schmeisser C."/>
            <person name="Liesegang H."/>
            <person name="Krysciak D."/>
            <person name="Bakkou N."/>
            <person name="Le Quere A."/>
            <person name="Wollherr A."/>
            <person name="Heinemeyer I."/>
            <person name="Morgenstern B."/>
            <person name="Pommerening-Roeser A."/>
            <person name="Flores M."/>
            <person name="Palacios R."/>
            <person name="Brenner S."/>
            <person name="Gottschalk G."/>
            <person name="Schmitz R.A."/>
            <person name="Broughton W.J."/>
            <person name="Perret X."/>
            <person name="Strittmatter A.W."/>
            <person name="Streit W.R."/>
        </authorList>
    </citation>
    <scope>NUCLEOTIDE SEQUENCE [LARGE SCALE GENOMIC DNA]</scope>
    <source>
        <strain>NBRC 101917 / NGR234</strain>
    </source>
</reference>
<evidence type="ECO:0000255" key="1">
    <source>
        <dbReference type="HAMAP-Rule" id="MF_00120"/>
    </source>
</evidence>